<comment type="function">
    <text evidence="1">Plays a role in virus entry by participating in host receptor binding at the cell surface.</text>
</comment>
<comment type="subunit">
    <text evidence="1 5">Interacts with isoform gQ2 (By similarity). The heterodimer gQ1-gQ2 associates with the glycoprotein complex gH-gL to form a tetrameric complex (By similarity). The gH/gL/gQ1/gQ2 complex binds to host TNFRSF4 (PubMed:23674671).</text>
</comment>
<comment type="subcellular location">
    <subcellularLocation>
        <location evidence="1">Virion membrane</location>
    </subcellularLocation>
    <subcellularLocation>
        <location evidence="1">Host endoplasmic reticulum-Golgi intermediate compartment</location>
    </subcellularLocation>
</comment>
<comment type="alternative products">
    <event type="alternative splicing"/>
    <isoform>
        <id>P0DOE1-1</id>
        <name evidence="2">Glycoprotein Q2</name>
        <sequence type="displayed"/>
    </isoform>
    <isoform>
        <id>Q9QJ11-1</id>
        <name evidence="2">Glycoprotein Q1</name>
        <sequence type="external"/>
    </isoform>
    <isoform>
        <id>P0DOE1-2</id>
        <name evidence="2">Glycoprotein Q0</name>
        <sequence type="not described"/>
    </isoform>
</comment>
<comment type="PTM">
    <text evidence="1">Glycosylated by host.</text>
</comment>
<proteinExistence type="evidence at protein level"/>
<organism>
    <name type="scientific">Human herpesvirus 6B (strain Z29)</name>
    <name type="common">HHV-6 variant B</name>
    <name type="synonym">Human B lymphotropic virus</name>
    <dbReference type="NCBI Taxonomy" id="36351"/>
    <lineage>
        <taxon>Viruses</taxon>
        <taxon>Duplodnaviria</taxon>
        <taxon>Heunggongvirae</taxon>
        <taxon>Peploviricota</taxon>
        <taxon>Herviviricetes</taxon>
        <taxon>Herpesvirales</taxon>
        <taxon>Orthoherpesviridae</taxon>
        <taxon>Betaherpesvirinae</taxon>
        <taxon>Roseolovirus</taxon>
        <taxon>Roseolovirus humanbeta6b</taxon>
        <taxon>Human herpesvirus 6B</taxon>
    </lineage>
</organism>
<gene>
    <name type="ORF">U100</name>
</gene>
<feature type="signal peptide" evidence="3">
    <location>
        <begin position="1"/>
        <end position="20"/>
    </location>
</feature>
<feature type="chain" id="PRO_0000438171" description="Glycoprotein Q2" evidence="3">
    <location>
        <begin position="21"/>
        <end position="182"/>
    </location>
</feature>
<feature type="glycosylation site" description="N-linked (GlcNAc...) asparagine; by host" evidence="4">
    <location>
        <position position="74"/>
    </location>
</feature>
<feature type="glycosylation site" description="N-linked (GlcNAc...) asparagine; by host" evidence="4">
    <location>
        <position position="110"/>
    </location>
</feature>
<organismHost>
    <name type="scientific">Homo sapiens</name>
    <name type="common">Human</name>
    <dbReference type="NCBI Taxonomy" id="9606"/>
</organismHost>
<accession>P0DOE1</accession>
<sequence length="182" mass="21045">MHFVAVYILTHFHAYPGVAALPFFSTLPKITSCCDHYVVLNSLSSVSSSTPTCLDGEXLFQNAGQKFCRPFTDNRTIVYTMQDQVQRPWSVTWMDFNLVISDYGRAVIENLTESAMSAHKNGPRYLQMETFISDLFRYECHRDNRYVLEKKLQMFYPTTHMNELLFYPSDPTLPSPYGNGHY</sequence>
<name>GQ2_HHV6Z</name>
<protein>
    <recommendedName>
        <fullName>Glycoprotein Q2</fullName>
        <shortName>gQ2</shortName>
    </recommendedName>
</protein>
<evidence type="ECO:0000250" key="1">
    <source>
        <dbReference type="UniProtKB" id="P0DOE0"/>
    </source>
</evidence>
<evidence type="ECO:0000250" key="2">
    <source>
        <dbReference type="UniProtKB" id="Q69572"/>
    </source>
</evidence>
<evidence type="ECO:0000255" key="3"/>
<evidence type="ECO:0000255" key="4">
    <source>
        <dbReference type="PROSITE-ProRule" id="PRU00498"/>
    </source>
</evidence>
<evidence type="ECO:0000269" key="5">
    <source>
    </source>
</evidence>
<dbReference type="EMBL" id="AF157706">
    <property type="status" value="NOT_ANNOTATED_CDS"/>
    <property type="molecule type" value="Genomic_DNA"/>
</dbReference>
<dbReference type="Proteomes" id="UP000006930">
    <property type="component" value="Segment"/>
</dbReference>
<dbReference type="GO" id="GO:0044172">
    <property type="term" value="C:host cell endoplasmic reticulum-Golgi intermediate compartment"/>
    <property type="evidence" value="ECO:0007669"/>
    <property type="project" value="UniProtKB-SubCell"/>
</dbReference>
<dbReference type="GO" id="GO:0016020">
    <property type="term" value="C:membrane"/>
    <property type="evidence" value="ECO:0007669"/>
    <property type="project" value="UniProtKB-KW"/>
</dbReference>
<dbReference type="GO" id="GO:0055036">
    <property type="term" value="C:virion membrane"/>
    <property type="evidence" value="ECO:0007669"/>
    <property type="project" value="UniProtKB-SubCell"/>
</dbReference>
<reference key="1">
    <citation type="journal article" date="1999" name="J. Virol.">
        <title>Human herpesvirus 6B genome sequence: coding content and comparison with human herpesvirus 6A.</title>
        <authorList>
            <person name="Dominguez G."/>
            <person name="Dambaugh T.R."/>
            <person name="Stamey F.R."/>
            <person name="Dewhurst S."/>
            <person name="Inoue N."/>
            <person name="Pellett P.E."/>
        </authorList>
    </citation>
    <scope>NUCLEOTIDE SEQUENCE [LARGE SCALE GENOMIC DNA]</scope>
</reference>
<reference key="2">
    <citation type="journal article" date="2013" name="Proc. Natl. Acad. Sci. U.S.A.">
        <title>CD134 is a cellular receptor specific for human herpesvirus-6B entry.</title>
        <authorList>
            <person name="Tang H."/>
            <person name="Serada S."/>
            <person name="Kawabata A."/>
            <person name="Ota M."/>
            <person name="Hayashi E."/>
            <person name="Naka T."/>
            <person name="Yamanishi K."/>
            <person name="Mori Y."/>
        </authorList>
    </citation>
    <scope>INTERACTION WITH HOST TNFRSF4</scope>
</reference>
<keyword id="KW-0025">Alternative splicing</keyword>
<keyword id="KW-0325">Glycoprotein</keyword>
<keyword id="KW-0426">Late protein</keyword>
<keyword id="KW-0472">Membrane</keyword>
<keyword id="KW-1185">Reference proteome</keyword>
<keyword id="KW-0732">Signal</keyword>
<keyword id="KW-0946">Virion</keyword>